<reference key="1">
    <citation type="submission" date="2006-03" db="EMBL/GenBank/DDBJ databases">
        <title>Complete sequence of Rhodopseudomonas palustris BisB5.</title>
        <authorList>
            <consortium name="US DOE Joint Genome Institute"/>
            <person name="Copeland A."/>
            <person name="Lucas S."/>
            <person name="Lapidus A."/>
            <person name="Barry K."/>
            <person name="Detter J.C."/>
            <person name="Glavina del Rio T."/>
            <person name="Hammon N."/>
            <person name="Israni S."/>
            <person name="Dalin E."/>
            <person name="Tice H."/>
            <person name="Pitluck S."/>
            <person name="Chain P."/>
            <person name="Malfatti S."/>
            <person name="Shin M."/>
            <person name="Vergez L."/>
            <person name="Schmutz J."/>
            <person name="Larimer F."/>
            <person name="Land M."/>
            <person name="Hauser L."/>
            <person name="Pelletier D.A."/>
            <person name="Kyrpides N."/>
            <person name="Lykidis A."/>
            <person name="Oda Y."/>
            <person name="Harwood C.S."/>
            <person name="Richardson P."/>
        </authorList>
    </citation>
    <scope>NUCLEOTIDE SEQUENCE [LARGE SCALE GENOMIC DNA]</scope>
    <source>
        <strain>BisB5</strain>
    </source>
</reference>
<sequence length="429" mass="45093">MDRIRIIGGNKLHGTIPISGAKNAALPLMIAAMLSDETLILDNVPRLADVALLQRILGNHGVDIMAVGKRPGDHEYQGQTLHISAKNIIDTTAPYDLVSKMRASFWVIAPLLARMHEAKVSLPGGCAIGTRPVDLLIMALEKLGAELSIDAGYVVAKAPGGLKGATIEFPKVTVSGTHVALMAAALAKGTTIIANAACEPEITDVADCLNKMGAKITGAGTPRIMIEGVSKLHGARHTVLPDRIETGTYAMAVAMTGGEVQLSGARPELLQSALDVLTQAGVTITVNNDGIKVARNGAGISPVTVTTAPFPGFPTDLQAQLMALMTRAKGASHITETIFENRFMHVQELARFGARIQLDGETATIDGVAKLRGAPVMATDLRASVSLVIAALAAEGETMVNRIYHLDRGFERLEEKLSACGATIERISG</sequence>
<keyword id="KW-0131">Cell cycle</keyword>
<keyword id="KW-0132">Cell division</keyword>
<keyword id="KW-0133">Cell shape</keyword>
<keyword id="KW-0961">Cell wall biogenesis/degradation</keyword>
<keyword id="KW-0963">Cytoplasm</keyword>
<keyword id="KW-0573">Peptidoglycan synthesis</keyword>
<keyword id="KW-0670">Pyruvate</keyword>
<keyword id="KW-0808">Transferase</keyword>
<protein>
    <recommendedName>
        <fullName evidence="1">UDP-N-acetylglucosamine 1-carboxyvinyltransferase</fullName>
        <ecNumber evidence="1">2.5.1.7</ecNumber>
    </recommendedName>
    <alternativeName>
        <fullName evidence="1">Enoylpyruvate transferase</fullName>
    </alternativeName>
    <alternativeName>
        <fullName evidence="1">UDP-N-acetylglucosamine enolpyruvyl transferase</fullName>
        <shortName evidence="1">EPT</shortName>
    </alternativeName>
</protein>
<gene>
    <name evidence="1" type="primary">murA</name>
    <name type="ordered locus">RPD_4281</name>
</gene>
<comment type="function">
    <text evidence="1">Cell wall formation. Adds enolpyruvyl to UDP-N-acetylglucosamine.</text>
</comment>
<comment type="catalytic activity">
    <reaction evidence="1">
        <text>phosphoenolpyruvate + UDP-N-acetyl-alpha-D-glucosamine = UDP-N-acetyl-3-O-(1-carboxyvinyl)-alpha-D-glucosamine + phosphate</text>
        <dbReference type="Rhea" id="RHEA:18681"/>
        <dbReference type="ChEBI" id="CHEBI:43474"/>
        <dbReference type="ChEBI" id="CHEBI:57705"/>
        <dbReference type="ChEBI" id="CHEBI:58702"/>
        <dbReference type="ChEBI" id="CHEBI:68483"/>
        <dbReference type="EC" id="2.5.1.7"/>
    </reaction>
</comment>
<comment type="pathway">
    <text evidence="1">Cell wall biogenesis; peptidoglycan biosynthesis.</text>
</comment>
<comment type="subcellular location">
    <subcellularLocation>
        <location evidence="1">Cytoplasm</location>
    </subcellularLocation>
</comment>
<comment type="similarity">
    <text evidence="1">Belongs to the EPSP synthase family. MurA subfamily.</text>
</comment>
<feature type="chain" id="PRO_1000023087" description="UDP-N-acetylglucosamine 1-carboxyvinyltransferase">
    <location>
        <begin position="1"/>
        <end position="429"/>
    </location>
</feature>
<feature type="active site" description="Proton donor" evidence="1">
    <location>
        <position position="126"/>
    </location>
</feature>
<feature type="binding site" evidence="1">
    <location>
        <begin position="22"/>
        <end position="23"/>
    </location>
    <ligand>
        <name>phosphoenolpyruvate</name>
        <dbReference type="ChEBI" id="CHEBI:58702"/>
    </ligand>
</feature>
<feature type="binding site" evidence="1">
    <location>
        <position position="102"/>
    </location>
    <ligand>
        <name>UDP-N-acetyl-alpha-D-glucosamine</name>
        <dbReference type="ChEBI" id="CHEBI:57705"/>
    </ligand>
</feature>
<feature type="binding site" evidence="1">
    <location>
        <begin position="131"/>
        <end position="135"/>
    </location>
    <ligand>
        <name>UDP-N-acetyl-alpha-D-glucosamine</name>
        <dbReference type="ChEBI" id="CHEBI:57705"/>
    </ligand>
</feature>
<feature type="binding site" evidence="1">
    <location>
        <position position="316"/>
    </location>
    <ligand>
        <name>UDP-N-acetyl-alpha-D-glucosamine</name>
        <dbReference type="ChEBI" id="CHEBI:57705"/>
    </ligand>
</feature>
<feature type="binding site" evidence="1">
    <location>
        <position position="338"/>
    </location>
    <ligand>
        <name>UDP-N-acetyl-alpha-D-glucosamine</name>
        <dbReference type="ChEBI" id="CHEBI:57705"/>
    </ligand>
</feature>
<feature type="modified residue" description="2-(S-cysteinyl)pyruvic acid O-phosphothioketal" evidence="1">
    <location>
        <position position="126"/>
    </location>
</feature>
<name>MURA_RHOPS</name>
<proteinExistence type="inferred from homology"/>
<dbReference type="EC" id="2.5.1.7" evidence="1"/>
<dbReference type="EMBL" id="CP000283">
    <property type="protein sequence ID" value="ABE41498.1"/>
    <property type="molecule type" value="Genomic_DNA"/>
</dbReference>
<dbReference type="SMR" id="Q130J1"/>
<dbReference type="STRING" id="316057.RPD_4281"/>
<dbReference type="KEGG" id="rpd:RPD_4281"/>
<dbReference type="eggNOG" id="COG0766">
    <property type="taxonomic scope" value="Bacteria"/>
</dbReference>
<dbReference type="HOGENOM" id="CLU_027387_0_0_5"/>
<dbReference type="BioCyc" id="RPAL316057:RPD_RS21530-MONOMER"/>
<dbReference type="UniPathway" id="UPA00219"/>
<dbReference type="Proteomes" id="UP000001818">
    <property type="component" value="Chromosome"/>
</dbReference>
<dbReference type="GO" id="GO:0005737">
    <property type="term" value="C:cytoplasm"/>
    <property type="evidence" value="ECO:0007669"/>
    <property type="project" value="UniProtKB-SubCell"/>
</dbReference>
<dbReference type="GO" id="GO:0008760">
    <property type="term" value="F:UDP-N-acetylglucosamine 1-carboxyvinyltransferase activity"/>
    <property type="evidence" value="ECO:0007669"/>
    <property type="project" value="UniProtKB-UniRule"/>
</dbReference>
<dbReference type="GO" id="GO:0051301">
    <property type="term" value="P:cell division"/>
    <property type="evidence" value="ECO:0007669"/>
    <property type="project" value="UniProtKB-KW"/>
</dbReference>
<dbReference type="GO" id="GO:0071555">
    <property type="term" value="P:cell wall organization"/>
    <property type="evidence" value="ECO:0007669"/>
    <property type="project" value="UniProtKB-KW"/>
</dbReference>
<dbReference type="GO" id="GO:0009252">
    <property type="term" value="P:peptidoglycan biosynthetic process"/>
    <property type="evidence" value="ECO:0007669"/>
    <property type="project" value="UniProtKB-UniRule"/>
</dbReference>
<dbReference type="GO" id="GO:0008360">
    <property type="term" value="P:regulation of cell shape"/>
    <property type="evidence" value="ECO:0007669"/>
    <property type="project" value="UniProtKB-KW"/>
</dbReference>
<dbReference type="GO" id="GO:0019277">
    <property type="term" value="P:UDP-N-acetylgalactosamine biosynthetic process"/>
    <property type="evidence" value="ECO:0007669"/>
    <property type="project" value="InterPro"/>
</dbReference>
<dbReference type="CDD" id="cd01555">
    <property type="entry name" value="UdpNAET"/>
    <property type="match status" value="1"/>
</dbReference>
<dbReference type="FunFam" id="3.65.10.10:FF:000001">
    <property type="entry name" value="UDP-N-acetylglucosamine 1-carboxyvinyltransferase"/>
    <property type="match status" value="1"/>
</dbReference>
<dbReference type="Gene3D" id="3.65.10.10">
    <property type="entry name" value="Enolpyruvate transferase domain"/>
    <property type="match status" value="2"/>
</dbReference>
<dbReference type="HAMAP" id="MF_00111">
    <property type="entry name" value="MurA"/>
    <property type="match status" value="1"/>
</dbReference>
<dbReference type="InterPro" id="IPR001986">
    <property type="entry name" value="Enolpyruvate_Tfrase_dom"/>
</dbReference>
<dbReference type="InterPro" id="IPR036968">
    <property type="entry name" value="Enolpyruvate_Tfrase_sf"/>
</dbReference>
<dbReference type="InterPro" id="IPR050068">
    <property type="entry name" value="MurA_subfamily"/>
</dbReference>
<dbReference type="InterPro" id="IPR013792">
    <property type="entry name" value="RNA3'P_cycl/enolpyr_Trfase_a/b"/>
</dbReference>
<dbReference type="InterPro" id="IPR005750">
    <property type="entry name" value="UDP_GlcNAc_COvinyl_MurA"/>
</dbReference>
<dbReference type="NCBIfam" id="TIGR01072">
    <property type="entry name" value="murA"/>
    <property type="match status" value="1"/>
</dbReference>
<dbReference type="NCBIfam" id="NF006873">
    <property type="entry name" value="PRK09369.1"/>
    <property type="match status" value="1"/>
</dbReference>
<dbReference type="PANTHER" id="PTHR43783">
    <property type="entry name" value="UDP-N-ACETYLGLUCOSAMINE 1-CARBOXYVINYLTRANSFERASE"/>
    <property type="match status" value="1"/>
</dbReference>
<dbReference type="PANTHER" id="PTHR43783:SF1">
    <property type="entry name" value="UDP-N-ACETYLGLUCOSAMINE 1-CARBOXYVINYLTRANSFERASE"/>
    <property type="match status" value="1"/>
</dbReference>
<dbReference type="Pfam" id="PF00275">
    <property type="entry name" value="EPSP_synthase"/>
    <property type="match status" value="1"/>
</dbReference>
<dbReference type="SUPFAM" id="SSF55205">
    <property type="entry name" value="EPT/RTPC-like"/>
    <property type="match status" value="1"/>
</dbReference>
<organism>
    <name type="scientific">Rhodopseudomonas palustris (strain BisB5)</name>
    <dbReference type="NCBI Taxonomy" id="316057"/>
    <lineage>
        <taxon>Bacteria</taxon>
        <taxon>Pseudomonadati</taxon>
        <taxon>Pseudomonadota</taxon>
        <taxon>Alphaproteobacteria</taxon>
        <taxon>Hyphomicrobiales</taxon>
        <taxon>Nitrobacteraceae</taxon>
        <taxon>Rhodopseudomonas</taxon>
    </lineage>
</organism>
<accession>Q130J1</accession>
<evidence type="ECO:0000255" key="1">
    <source>
        <dbReference type="HAMAP-Rule" id="MF_00111"/>
    </source>
</evidence>